<sequence>MSYNQNYNQDFNNNSYGSYGNSYNNNSYGQNNYGGSYGGNSYGGGRGGSRGGFRGGRGGGFGGRRVDERVELTTPEWDLDSLPKFEKNFYSEHPDVSARSESEVQSFRKEHDMKCVGTDIPKPITSFDEAGFPDYVLNEVKQQGFPKPTAIQCQGWPMALSGRDMIGIAATGSGKTLSYCLPSIVHINAQPLLGPGDGPIVLVLAPTRELAVQIQQECSKFGASSRIRNTCIYGGAPKGQQIRDLARGVEICIATPGRLIDMLETGKTNLRRVTYLVLDEADRMLDMGFEPQIRKIVDQIRPDRQTLMWSATWPKEVQTLTRDYLNDPIQVTIGSLELAASHTITQIVEVLSEFEKRDRLVKHLETATADKEAKVLIFSSTKRACDEITSYLRADGWPALAIHGDKQQNERDWVLREFKTGKSPIMVATDVAARGIDVKGISYVINYDMPGNIEDYVHRIGRTGRAGTTGTAVSLFTEANSKLGGDLCKIMREANQTVPPELLRYDRRSFGSHIRYGRGGGRGGWGGRGRGGRGRGRGGFQSGSNGAPMGNRRF</sequence>
<reference key="1">
    <citation type="journal article" date="2009" name="Nature">
        <title>Evolution of pathogenicity and sexual reproduction in eight Candida genomes.</title>
        <authorList>
            <person name="Butler G."/>
            <person name="Rasmussen M.D."/>
            <person name="Lin M.F."/>
            <person name="Santos M.A.S."/>
            <person name="Sakthikumar S."/>
            <person name="Munro C.A."/>
            <person name="Rheinbay E."/>
            <person name="Grabherr M."/>
            <person name="Forche A."/>
            <person name="Reedy J.L."/>
            <person name="Agrafioti I."/>
            <person name="Arnaud M.B."/>
            <person name="Bates S."/>
            <person name="Brown A.J.P."/>
            <person name="Brunke S."/>
            <person name="Costanzo M.C."/>
            <person name="Fitzpatrick D.A."/>
            <person name="de Groot P.W.J."/>
            <person name="Harris D."/>
            <person name="Hoyer L.L."/>
            <person name="Hube B."/>
            <person name="Klis F.M."/>
            <person name="Kodira C."/>
            <person name="Lennard N."/>
            <person name="Logue M.E."/>
            <person name="Martin R."/>
            <person name="Neiman A.M."/>
            <person name="Nikolaou E."/>
            <person name="Quail M.A."/>
            <person name="Quinn J."/>
            <person name="Santos M.C."/>
            <person name="Schmitzberger F.F."/>
            <person name="Sherlock G."/>
            <person name="Shah P."/>
            <person name="Silverstein K.A.T."/>
            <person name="Skrzypek M.S."/>
            <person name="Soll D."/>
            <person name="Staggs R."/>
            <person name="Stansfield I."/>
            <person name="Stumpf M.P.H."/>
            <person name="Sudbery P.E."/>
            <person name="Srikantha T."/>
            <person name="Zeng Q."/>
            <person name="Berman J."/>
            <person name="Berriman M."/>
            <person name="Heitman J."/>
            <person name="Gow N.A.R."/>
            <person name="Lorenz M.C."/>
            <person name="Birren B.W."/>
            <person name="Kellis M."/>
            <person name="Cuomo C.A."/>
        </authorList>
    </citation>
    <scope>NUCLEOTIDE SEQUENCE [LARGE SCALE GENOMIC DNA]</scope>
    <source>
        <strain>ATCC 6260 / CBS 566 / DSM 6381 / JCM 1539 / NBRC 10279 / NRRL Y-324</strain>
    </source>
</reference>
<evidence type="ECO:0000250" key="1"/>
<evidence type="ECO:0000255" key="2">
    <source>
        <dbReference type="PROSITE-ProRule" id="PRU00541"/>
    </source>
</evidence>
<evidence type="ECO:0000255" key="3">
    <source>
        <dbReference type="PROSITE-ProRule" id="PRU00542"/>
    </source>
</evidence>
<evidence type="ECO:0000256" key="4">
    <source>
        <dbReference type="SAM" id="MobiDB-lite"/>
    </source>
</evidence>
<evidence type="ECO:0000305" key="5"/>
<keyword id="KW-0067">ATP-binding</keyword>
<keyword id="KW-0963">Cytoplasm</keyword>
<keyword id="KW-0347">Helicase</keyword>
<keyword id="KW-0378">Hydrolase</keyword>
<keyword id="KW-0866">Nonsense-mediated mRNA decay</keyword>
<keyword id="KW-0547">Nucleotide-binding</keyword>
<keyword id="KW-0539">Nucleus</keyword>
<keyword id="KW-1185">Reference proteome</keyword>
<keyword id="KW-0690">Ribosome biogenesis</keyword>
<keyword id="KW-0694">RNA-binding</keyword>
<keyword id="KW-0698">rRNA processing</keyword>
<name>DBP2_PICGU</name>
<gene>
    <name type="primary">DBP2</name>
    <name type="ORF">PGUG_04031</name>
</gene>
<dbReference type="EC" id="3.6.4.13"/>
<dbReference type="EMBL" id="CH408159">
    <property type="protein sequence ID" value="EDK39933.2"/>
    <property type="status" value="ALT_SEQ"/>
    <property type="molecule type" value="Genomic_DNA"/>
</dbReference>
<dbReference type="RefSeq" id="XP_001483302.1">
    <property type="nucleotide sequence ID" value="XM_001483252.1"/>
</dbReference>
<dbReference type="SMR" id="A5DL80"/>
<dbReference type="FunCoup" id="A5DL80">
    <property type="interactions" value="1190"/>
</dbReference>
<dbReference type="STRING" id="294746.A5DL80"/>
<dbReference type="GeneID" id="5125550"/>
<dbReference type="KEGG" id="pgu:PGUG_04031"/>
<dbReference type="eggNOG" id="KOG0331">
    <property type="taxonomic scope" value="Eukaryota"/>
</dbReference>
<dbReference type="HOGENOM" id="CLU_003041_16_9_1"/>
<dbReference type="InParanoid" id="A5DL80"/>
<dbReference type="OrthoDB" id="196131at2759"/>
<dbReference type="Proteomes" id="UP000001997">
    <property type="component" value="Unassembled WGS sequence"/>
</dbReference>
<dbReference type="GO" id="GO:0005737">
    <property type="term" value="C:cytoplasm"/>
    <property type="evidence" value="ECO:0007669"/>
    <property type="project" value="UniProtKB-SubCell"/>
</dbReference>
<dbReference type="GO" id="GO:0005634">
    <property type="term" value="C:nucleus"/>
    <property type="evidence" value="ECO:0007669"/>
    <property type="project" value="UniProtKB-SubCell"/>
</dbReference>
<dbReference type="GO" id="GO:0005524">
    <property type="term" value="F:ATP binding"/>
    <property type="evidence" value="ECO:0007669"/>
    <property type="project" value="UniProtKB-KW"/>
</dbReference>
<dbReference type="GO" id="GO:0016887">
    <property type="term" value="F:ATP hydrolysis activity"/>
    <property type="evidence" value="ECO:0007669"/>
    <property type="project" value="RHEA"/>
</dbReference>
<dbReference type="GO" id="GO:0003723">
    <property type="term" value="F:RNA binding"/>
    <property type="evidence" value="ECO:0007669"/>
    <property type="project" value="UniProtKB-KW"/>
</dbReference>
<dbReference type="GO" id="GO:0003724">
    <property type="term" value="F:RNA helicase activity"/>
    <property type="evidence" value="ECO:0007669"/>
    <property type="project" value="UniProtKB-EC"/>
</dbReference>
<dbReference type="GO" id="GO:0000184">
    <property type="term" value="P:nuclear-transcribed mRNA catabolic process, nonsense-mediated decay"/>
    <property type="evidence" value="ECO:0007669"/>
    <property type="project" value="UniProtKB-KW"/>
</dbReference>
<dbReference type="GO" id="GO:0006364">
    <property type="term" value="P:rRNA processing"/>
    <property type="evidence" value="ECO:0007669"/>
    <property type="project" value="UniProtKB-KW"/>
</dbReference>
<dbReference type="CDD" id="cd17966">
    <property type="entry name" value="DEADc_DDX5_DDX17"/>
    <property type="match status" value="1"/>
</dbReference>
<dbReference type="CDD" id="cd18787">
    <property type="entry name" value="SF2_C_DEAD"/>
    <property type="match status" value="1"/>
</dbReference>
<dbReference type="FunFam" id="3.40.50.300:FF:000008">
    <property type="entry name" value="ATP-dependent RNA helicase RhlB"/>
    <property type="match status" value="1"/>
</dbReference>
<dbReference type="FunFam" id="3.40.50.300:FF:000079">
    <property type="entry name" value="probable ATP-dependent RNA helicase DDX17"/>
    <property type="match status" value="1"/>
</dbReference>
<dbReference type="Gene3D" id="3.40.50.300">
    <property type="entry name" value="P-loop containing nucleotide triphosphate hydrolases"/>
    <property type="match status" value="2"/>
</dbReference>
<dbReference type="InterPro" id="IPR011545">
    <property type="entry name" value="DEAD/DEAH_box_helicase_dom"/>
</dbReference>
<dbReference type="InterPro" id="IPR014001">
    <property type="entry name" value="Helicase_ATP-bd"/>
</dbReference>
<dbReference type="InterPro" id="IPR001650">
    <property type="entry name" value="Helicase_C-like"/>
</dbReference>
<dbReference type="InterPro" id="IPR027417">
    <property type="entry name" value="P-loop_NTPase"/>
</dbReference>
<dbReference type="InterPro" id="IPR000629">
    <property type="entry name" value="RNA-helicase_DEAD-box_CS"/>
</dbReference>
<dbReference type="InterPro" id="IPR014014">
    <property type="entry name" value="RNA_helicase_DEAD_Q_motif"/>
</dbReference>
<dbReference type="PANTHER" id="PTHR47958">
    <property type="entry name" value="ATP-DEPENDENT RNA HELICASE DBP3"/>
    <property type="match status" value="1"/>
</dbReference>
<dbReference type="Pfam" id="PF00270">
    <property type="entry name" value="DEAD"/>
    <property type="match status" value="1"/>
</dbReference>
<dbReference type="Pfam" id="PF00271">
    <property type="entry name" value="Helicase_C"/>
    <property type="match status" value="1"/>
</dbReference>
<dbReference type="SMART" id="SM00487">
    <property type="entry name" value="DEXDc"/>
    <property type="match status" value="1"/>
</dbReference>
<dbReference type="SMART" id="SM00490">
    <property type="entry name" value="HELICc"/>
    <property type="match status" value="1"/>
</dbReference>
<dbReference type="SUPFAM" id="SSF52540">
    <property type="entry name" value="P-loop containing nucleoside triphosphate hydrolases"/>
    <property type="match status" value="1"/>
</dbReference>
<dbReference type="PROSITE" id="PS00039">
    <property type="entry name" value="DEAD_ATP_HELICASE"/>
    <property type="match status" value="1"/>
</dbReference>
<dbReference type="PROSITE" id="PS51192">
    <property type="entry name" value="HELICASE_ATP_BIND_1"/>
    <property type="match status" value="1"/>
</dbReference>
<dbReference type="PROSITE" id="PS51194">
    <property type="entry name" value="HELICASE_CTER"/>
    <property type="match status" value="1"/>
</dbReference>
<dbReference type="PROSITE" id="PS51195">
    <property type="entry name" value="Q_MOTIF"/>
    <property type="match status" value="1"/>
</dbReference>
<accession>A5DL80</accession>
<protein>
    <recommendedName>
        <fullName>ATP-dependent RNA helicase DBP2</fullName>
        <ecNumber>3.6.4.13</ecNumber>
    </recommendedName>
</protein>
<feature type="chain" id="PRO_0000294616" description="ATP-dependent RNA helicase DBP2">
    <location>
        <begin position="1"/>
        <end position="554"/>
    </location>
</feature>
<feature type="domain" description="Helicase ATP-binding" evidence="2">
    <location>
        <begin position="156"/>
        <end position="331"/>
    </location>
</feature>
<feature type="domain" description="Helicase C-terminal" evidence="3">
    <location>
        <begin position="346"/>
        <end position="506"/>
    </location>
</feature>
<feature type="region of interest" description="Disordered" evidence="4">
    <location>
        <begin position="521"/>
        <end position="554"/>
    </location>
</feature>
<feature type="short sequence motif" description="Q motif">
    <location>
        <begin position="125"/>
        <end position="153"/>
    </location>
</feature>
<feature type="short sequence motif" description="DEAD box">
    <location>
        <begin position="279"/>
        <end position="282"/>
    </location>
</feature>
<feature type="binding site" evidence="2">
    <location>
        <begin position="169"/>
        <end position="176"/>
    </location>
    <ligand>
        <name>ATP</name>
        <dbReference type="ChEBI" id="CHEBI:30616"/>
    </ligand>
</feature>
<organism>
    <name type="scientific">Meyerozyma guilliermondii (strain ATCC 6260 / CBS 566 / DSM 6381 / JCM 1539 / NBRC 10279 / NRRL Y-324)</name>
    <name type="common">Yeast</name>
    <name type="synonym">Candida guilliermondii</name>
    <dbReference type="NCBI Taxonomy" id="294746"/>
    <lineage>
        <taxon>Eukaryota</taxon>
        <taxon>Fungi</taxon>
        <taxon>Dikarya</taxon>
        <taxon>Ascomycota</taxon>
        <taxon>Saccharomycotina</taxon>
        <taxon>Pichiomycetes</taxon>
        <taxon>Debaryomycetaceae</taxon>
        <taxon>Meyerozyma</taxon>
    </lineage>
</organism>
<comment type="function">
    <text evidence="1">ATP-dependent RNA helicase involved nonsense-mediated mRNA decay and ribosome biogenesis through rRNA processing.</text>
</comment>
<comment type="catalytic activity">
    <reaction>
        <text>ATP + H2O = ADP + phosphate + H(+)</text>
        <dbReference type="Rhea" id="RHEA:13065"/>
        <dbReference type="ChEBI" id="CHEBI:15377"/>
        <dbReference type="ChEBI" id="CHEBI:15378"/>
        <dbReference type="ChEBI" id="CHEBI:30616"/>
        <dbReference type="ChEBI" id="CHEBI:43474"/>
        <dbReference type="ChEBI" id="CHEBI:456216"/>
        <dbReference type="EC" id="3.6.4.13"/>
    </reaction>
</comment>
<comment type="subunit">
    <text evidence="1">Associates with polysomes.</text>
</comment>
<comment type="subcellular location">
    <subcellularLocation>
        <location evidence="1">Cytoplasm</location>
    </subcellularLocation>
    <subcellularLocation>
        <location evidence="1">Nucleus</location>
    </subcellularLocation>
</comment>
<comment type="domain">
    <text>The Q motif is unique to and characteristic of the DEAD box family of RNA helicases and controls ATP binding and hydrolysis.</text>
</comment>
<comment type="similarity">
    <text evidence="5">Belongs to the DEAD box helicase family. DDX5/DBP2 subfamily.</text>
</comment>
<comment type="sequence caution" evidence="5">
    <conflict type="erroneous gene model prediction">
        <sequence resource="EMBL-CDS" id="EDK39933"/>
    </conflict>
</comment>
<proteinExistence type="inferred from homology"/>